<feature type="chain" id="PRO_0000350991" description="Nucleolar protein 58">
    <location>
        <begin position="1"/>
        <end position="508"/>
    </location>
</feature>
<feature type="domain" description="Nop" evidence="2">
    <location>
        <begin position="283"/>
        <end position="403"/>
    </location>
</feature>
<feature type="region of interest" description="Disordered" evidence="3">
    <location>
        <begin position="426"/>
        <end position="508"/>
    </location>
</feature>
<feature type="compositionally biased region" description="Acidic residues" evidence="3">
    <location>
        <begin position="440"/>
        <end position="449"/>
    </location>
</feature>
<feature type="compositionally biased region" description="Basic and acidic residues" evidence="3">
    <location>
        <begin position="460"/>
        <end position="472"/>
    </location>
</feature>
<feature type="compositionally biased region" description="Basic residues" evidence="3">
    <location>
        <begin position="473"/>
        <end position="486"/>
    </location>
</feature>
<feature type="compositionally biased region" description="Basic residues" evidence="3">
    <location>
        <begin position="498"/>
        <end position="508"/>
    </location>
</feature>
<feature type="modified residue" description="Phosphoserine" evidence="5">
    <location>
        <position position="33"/>
    </location>
</feature>
<feature type="modified residue" description="Phosphoserine" evidence="5">
    <location>
        <position position="441"/>
    </location>
</feature>
<proteinExistence type="evidence at protein level"/>
<comment type="function">
    <text evidence="1">Required for pre-18S rRNA processing. May bind microtubules (By similarity).</text>
</comment>
<comment type="subcellular location">
    <subcellularLocation>
        <location evidence="4">Nucleus</location>
        <location evidence="4">Nucleolus</location>
    </subcellularLocation>
</comment>
<comment type="similarity">
    <text evidence="6">Belongs to the NOP5/NOP56 family.</text>
</comment>
<protein>
    <recommendedName>
        <fullName>Nucleolar protein 58</fullName>
    </recommendedName>
</protein>
<reference key="1">
    <citation type="journal article" date="2002" name="Nature">
        <title>The genome sequence of Schizosaccharomyces pombe.</title>
        <authorList>
            <person name="Wood V."/>
            <person name="Gwilliam R."/>
            <person name="Rajandream M.A."/>
            <person name="Lyne M.H."/>
            <person name="Lyne R."/>
            <person name="Stewart A."/>
            <person name="Sgouros J.G."/>
            <person name="Peat N."/>
            <person name="Hayles J."/>
            <person name="Baker S.G."/>
            <person name="Basham D."/>
            <person name="Bowman S."/>
            <person name="Brooks K."/>
            <person name="Brown D."/>
            <person name="Brown S."/>
            <person name="Chillingworth T."/>
            <person name="Churcher C.M."/>
            <person name="Collins M."/>
            <person name="Connor R."/>
            <person name="Cronin A."/>
            <person name="Davis P."/>
            <person name="Feltwell T."/>
            <person name="Fraser A."/>
            <person name="Gentles S."/>
            <person name="Goble A."/>
            <person name="Hamlin N."/>
            <person name="Harris D.E."/>
            <person name="Hidalgo J."/>
            <person name="Hodgson G."/>
            <person name="Holroyd S."/>
            <person name="Hornsby T."/>
            <person name="Howarth S."/>
            <person name="Huckle E.J."/>
            <person name="Hunt S."/>
            <person name="Jagels K."/>
            <person name="James K.D."/>
            <person name="Jones L."/>
            <person name="Jones M."/>
            <person name="Leather S."/>
            <person name="McDonald S."/>
            <person name="McLean J."/>
            <person name="Mooney P."/>
            <person name="Moule S."/>
            <person name="Mungall K.L."/>
            <person name="Murphy L.D."/>
            <person name="Niblett D."/>
            <person name="Odell C."/>
            <person name="Oliver K."/>
            <person name="O'Neil S."/>
            <person name="Pearson D."/>
            <person name="Quail M.A."/>
            <person name="Rabbinowitsch E."/>
            <person name="Rutherford K.M."/>
            <person name="Rutter S."/>
            <person name="Saunders D."/>
            <person name="Seeger K."/>
            <person name="Sharp S."/>
            <person name="Skelton J."/>
            <person name="Simmonds M.N."/>
            <person name="Squares R."/>
            <person name="Squares S."/>
            <person name="Stevens K."/>
            <person name="Taylor K."/>
            <person name="Taylor R.G."/>
            <person name="Tivey A."/>
            <person name="Walsh S.V."/>
            <person name="Warren T."/>
            <person name="Whitehead S."/>
            <person name="Woodward J.R."/>
            <person name="Volckaert G."/>
            <person name="Aert R."/>
            <person name="Robben J."/>
            <person name="Grymonprez B."/>
            <person name="Weltjens I."/>
            <person name="Vanstreels E."/>
            <person name="Rieger M."/>
            <person name="Schaefer M."/>
            <person name="Mueller-Auer S."/>
            <person name="Gabel C."/>
            <person name="Fuchs M."/>
            <person name="Duesterhoeft A."/>
            <person name="Fritzc C."/>
            <person name="Holzer E."/>
            <person name="Moestl D."/>
            <person name="Hilbert H."/>
            <person name="Borzym K."/>
            <person name="Langer I."/>
            <person name="Beck A."/>
            <person name="Lehrach H."/>
            <person name="Reinhardt R."/>
            <person name="Pohl T.M."/>
            <person name="Eger P."/>
            <person name="Zimmermann W."/>
            <person name="Wedler H."/>
            <person name="Wambutt R."/>
            <person name="Purnelle B."/>
            <person name="Goffeau A."/>
            <person name="Cadieu E."/>
            <person name="Dreano S."/>
            <person name="Gloux S."/>
            <person name="Lelaure V."/>
            <person name="Mottier S."/>
            <person name="Galibert F."/>
            <person name="Aves S.J."/>
            <person name="Xiang Z."/>
            <person name="Hunt C."/>
            <person name="Moore K."/>
            <person name="Hurst S.M."/>
            <person name="Lucas M."/>
            <person name="Rochet M."/>
            <person name="Gaillardin C."/>
            <person name="Tallada V.A."/>
            <person name="Garzon A."/>
            <person name="Thode G."/>
            <person name="Daga R.R."/>
            <person name="Cruzado L."/>
            <person name="Jimenez J."/>
            <person name="Sanchez M."/>
            <person name="del Rey F."/>
            <person name="Benito J."/>
            <person name="Dominguez A."/>
            <person name="Revuelta J.L."/>
            <person name="Moreno S."/>
            <person name="Armstrong J."/>
            <person name="Forsburg S.L."/>
            <person name="Cerutti L."/>
            <person name="Lowe T."/>
            <person name="McCombie W.R."/>
            <person name="Paulsen I."/>
            <person name="Potashkin J."/>
            <person name="Shpakovski G.V."/>
            <person name="Ussery D."/>
            <person name="Barrell B.G."/>
            <person name="Nurse P."/>
        </authorList>
    </citation>
    <scope>NUCLEOTIDE SEQUENCE [LARGE SCALE GENOMIC DNA]</scope>
    <source>
        <strain>972 / ATCC 24843</strain>
    </source>
</reference>
<reference key="2">
    <citation type="journal article" date="2006" name="Nat. Biotechnol.">
        <title>ORFeome cloning and global analysis of protein localization in the fission yeast Schizosaccharomyces pombe.</title>
        <authorList>
            <person name="Matsuyama A."/>
            <person name="Arai R."/>
            <person name="Yashiroda Y."/>
            <person name="Shirai A."/>
            <person name="Kamata A."/>
            <person name="Sekido S."/>
            <person name="Kobayashi Y."/>
            <person name="Hashimoto A."/>
            <person name="Hamamoto M."/>
            <person name="Hiraoka Y."/>
            <person name="Horinouchi S."/>
            <person name="Yoshida M."/>
        </authorList>
    </citation>
    <scope>SUBCELLULAR LOCATION [LARGE SCALE ANALYSIS]</scope>
</reference>
<reference key="3">
    <citation type="journal article" date="2008" name="J. Proteome Res.">
        <title>Phosphoproteome analysis of fission yeast.</title>
        <authorList>
            <person name="Wilson-Grady J.T."/>
            <person name="Villen J."/>
            <person name="Gygi S.P."/>
        </authorList>
    </citation>
    <scope>PHOSPHORYLATION [LARGE SCALE ANALYSIS] AT SER-33 AND SER-441</scope>
    <scope>IDENTIFICATION BY MASS SPECTROMETRY</scope>
</reference>
<keyword id="KW-0539">Nucleus</keyword>
<keyword id="KW-0597">Phosphoprotein</keyword>
<keyword id="KW-1185">Reference proteome</keyword>
<keyword id="KW-0687">Ribonucleoprotein</keyword>
<keyword id="KW-0690">Ribosome biogenesis</keyword>
<keyword id="KW-0698">rRNA processing</keyword>
<organism>
    <name type="scientific">Schizosaccharomyces pombe (strain 972 / ATCC 24843)</name>
    <name type="common">Fission yeast</name>
    <dbReference type="NCBI Taxonomy" id="284812"/>
    <lineage>
        <taxon>Eukaryota</taxon>
        <taxon>Fungi</taxon>
        <taxon>Dikarya</taxon>
        <taxon>Ascomycota</taxon>
        <taxon>Taphrinomycotina</taxon>
        <taxon>Schizosaccharomycetes</taxon>
        <taxon>Schizosaccharomycetales</taxon>
        <taxon>Schizosaccharomycetaceae</taxon>
        <taxon>Schizosaccharomyces</taxon>
    </lineage>
</organism>
<gene>
    <name type="primary">nop58</name>
    <name type="ORF">SPAC23G3.06</name>
</gene>
<accession>Q9P7S7</accession>
<sequence length="508" mass="55759">MFILTETAAGYAIFKAKDKLLKKRDALIEDLKSPEGASNLLKLQSFAKFESTVDALDNVSALVEGKVSSKLSSLLEGLSDSKSSTLVVADPKLGNAINKLPGLEFEIISDSSVQDLYRGIREHLSSLISGLAPSDLNAMSLGLSHSLSRHKLKFSPDKVDTMIVQAIALLDDLDKELNTYAMRVREWYGWHFPEMGKIIQDNLAYARVIKAMGMRTKCSETDFSDILPEEIEATLKSAAEISMGTEITEEDLDNIVMLADQVLELASYRAQLSEYLRNRMQAIAPNLTALVGELVGARLIAHAGSLMNLAKQPASTIQILGAEKALFRALKTKHSTPKYGLIYHASLVGQANSKNKGKIARVLATKAALSLRVDALSDKDTTNGNIGLENRIRVENRLRSLEGGKLLPLPTAPVQQSKVQINGTSAYSTATDAVTKDAEESQEDVEMDIVIEKKKKKSSKLKEADGESSKKEKKEKKDKKHKKSKRKSEESEDGESPKKKKKSKKSKD</sequence>
<name>NOP58_SCHPO</name>
<dbReference type="EMBL" id="CU329670">
    <property type="protein sequence ID" value="CAB72231.1"/>
    <property type="molecule type" value="Genomic_DNA"/>
</dbReference>
<dbReference type="PIR" id="T50180">
    <property type="entry name" value="T50180"/>
</dbReference>
<dbReference type="RefSeq" id="NP_593106.1">
    <property type="nucleotide sequence ID" value="NM_001018503.2"/>
</dbReference>
<dbReference type="SMR" id="Q9P7S7"/>
<dbReference type="BioGRID" id="278305">
    <property type="interactions" value="17"/>
</dbReference>
<dbReference type="FunCoup" id="Q9P7S7">
    <property type="interactions" value="972"/>
</dbReference>
<dbReference type="IntAct" id="Q9P7S7">
    <property type="interactions" value="1"/>
</dbReference>
<dbReference type="STRING" id="284812.Q9P7S7"/>
<dbReference type="iPTMnet" id="Q9P7S7"/>
<dbReference type="PaxDb" id="4896-SPAC23G3.06.1"/>
<dbReference type="EnsemblFungi" id="SPAC23G3.06.1">
    <property type="protein sequence ID" value="SPAC23G3.06.1:pep"/>
    <property type="gene ID" value="SPAC23G3.06"/>
</dbReference>
<dbReference type="GeneID" id="2541814"/>
<dbReference type="KEGG" id="spo:2541814"/>
<dbReference type="PomBase" id="SPAC23G3.06">
    <property type="gene designation" value="nop58"/>
</dbReference>
<dbReference type="VEuPathDB" id="FungiDB:SPAC23G3.06"/>
<dbReference type="eggNOG" id="KOG2572">
    <property type="taxonomic scope" value="Eukaryota"/>
</dbReference>
<dbReference type="HOGENOM" id="CLU_015495_5_2_1"/>
<dbReference type="InParanoid" id="Q9P7S7"/>
<dbReference type="OMA" id="NRMMVLA"/>
<dbReference type="PhylomeDB" id="Q9P7S7"/>
<dbReference type="Reactome" id="R-SPO-4570464">
    <property type="pathway name" value="SUMOylation of RNA binding proteins"/>
</dbReference>
<dbReference type="Reactome" id="R-SPO-6791226">
    <property type="pathway name" value="Major pathway of rRNA processing in the nucleolus and cytosol"/>
</dbReference>
<dbReference type="PRO" id="PR:Q9P7S7"/>
<dbReference type="Proteomes" id="UP000002485">
    <property type="component" value="Chromosome I"/>
</dbReference>
<dbReference type="GO" id="GO:0031428">
    <property type="term" value="C:box C/D methylation guide snoRNP complex"/>
    <property type="evidence" value="ECO:0000318"/>
    <property type="project" value="GO_Central"/>
</dbReference>
<dbReference type="GO" id="GO:0005730">
    <property type="term" value="C:nucleolus"/>
    <property type="evidence" value="ECO:0007005"/>
    <property type="project" value="PomBase"/>
</dbReference>
<dbReference type="GO" id="GO:0005634">
    <property type="term" value="C:nucleus"/>
    <property type="evidence" value="ECO:0007005"/>
    <property type="project" value="PomBase"/>
</dbReference>
<dbReference type="GO" id="GO:0032040">
    <property type="term" value="C:small-subunit processome"/>
    <property type="evidence" value="ECO:0000314"/>
    <property type="project" value="PomBase"/>
</dbReference>
<dbReference type="GO" id="GO:0030515">
    <property type="term" value="F:snoRNA binding"/>
    <property type="evidence" value="ECO:0000318"/>
    <property type="project" value="GO_Central"/>
</dbReference>
<dbReference type="GO" id="GO:0000452">
    <property type="term" value="P:snoRNA guided rRNA 2'-O-methylation"/>
    <property type="evidence" value="ECO:0000266"/>
    <property type="project" value="PomBase"/>
</dbReference>
<dbReference type="FunFam" id="1.10.246.90:FF:000003">
    <property type="entry name" value="Nucleolar protein 58"/>
    <property type="match status" value="1"/>
</dbReference>
<dbReference type="FunFam" id="1.10.287.4070:FF:000001">
    <property type="entry name" value="Probable Nucleolar protein 58"/>
    <property type="match status" value="1"/>
</dbReference>
<dbReference type="Gene3D" id="1.10.287.4070">
    <property type="match status" value="1"/>
</dbReference>
<dbReference type="Gene3D" id="1.10.246.90">
    <property type="entry name" value="Nop domain"/>
    <property type="match status" value="1"/>
</dbReference>
<dbReference type="InterPro" id="IPR045056">
    <property type="entry name" value="Nop56/Nop58"/>
</dbReference>
<dbReference type="InterPro" id="IPR012974">
    <property type="entry name" value="NOP58/56_N"/>
</dbReference>
<dbReference type="InterPro" id="IPR042239">
    <property type="entry name" value="Nop_C"/>
</dbReference>
<dbReference type="InterPro" id="IPR002687">
    <property type="entry name" value="Nop_dom"/>
</dbReference>
<dbReference type="InterPro" id="IPR036070">
    <property type="entry name" value="Nop_dom_sf"/>
</dbReference>
<dbReference type="InterPro" id="IPR012976">
    <property type="entry name" value="NOSIC"/>
</dbReference>
<dbReference type="PANTHER" id="PTHR10894">
    <property type="entry name" value="NUCLEOLAR PROTEIN 5 NUCLEOLAR PROTEIN NOP5 NOP58"/>
    <property type="match status" value="1"/>
</dbReference>
<dbReference type="PANTHER" id="PTHR10894:SF1">
    <property type="entry name" value="NUCLEOLAR PROTEIN 58"/>
    <property type="match status" value="1"/>
</dbReference>
<dbReference type="Pfam" id="PF01798">
    <property type="entry name" value="Nop"/>
    <property type="match status" value="1"/>
</dbReference>
<dbReference type="Pfam" id="PF08156">
    <property type="entry name" value="NOP5NT"/>
    <property type="match status" value="1"/>
</dbReference>
<dbReference type="SMART" id="SM00931">
    <property type="entry name" value="NOSIC"/>
    <property type="match status" value="1"/>
</dbReference>
<dbReference type="SUPFAM" id="SSF89124">
    <property type="entry name" value="Nop domain"/>
    <property type="match status" value="1"/>
</dbReference>
<dbReference type="PROSITE" id="PS51358">
    <property type="entry name" value="NOP"/>
    <property type="match status" value="1"/>
</dbReference>
<evidence type="ECO:0000250" key="1"/>
<evidence type="ECO:0000255" key="2">
    <source>
        <dbReference type="PROSITE-ProRule" id="PRU00690"/>
    </source>
</evidence>
<evidence type="ECO:0000256" key="3">
    <source>
        <dbReference type="SAM" id="MobiDB-lite"/>
    </source>
</evidence>
<evidence type="ECO:0000269" key="4">
    <source>
    </source>
</evidence>
<evidence type="ECO:0000269" key="5">
    <source>
    </source>
</evidence>
<evidence type="ECO:0000305" key="6"/>